<protein>
    <recommendedName>
        <fullName evidence="1">Aspartyl/glutamyl-tRNA(Asn/Gln) amidotransferase subunit B</fullName>
        <shortName evidence="1">Asp/Glu-ADT subunit B</shortName>
        <ecNumber evidence="1">6.3.5.-</ecNumber>
    </recommendedName>
</protein>
<sequence>MNWEMVIGLEVHIQLSTKSKLFSTSATKYGQHQNTQAAFLDLGLPGTLPVVNKEAIRKAVIFGLAVDAKISKDSFFARKNYFYPDLSKGYQISQSTNPIVQEGRLEIETSKGLKTIRIERAHLEEDAGKSVHGYIAGETGLDYNRAGTPLLEIVTYPDFRSAEEVVAYLKKLHQLVKHLGICDGNMQEGSFRCDVNLSIRPQGQAKFGTRAELKNINSFRFIDKAIEYEYARQVSVLESGGEVVQETRLYDADANETRSMRAKEDAFDYRYFPDPDLLPLVITDEYIESIKKQMPLKSEEREAVYREHLAEQEVEFLLSNLEIADYYDKVAVVIGYKPAYNWITVDLISTLNRAEKEFSSDVVPAEILLEIIANVQKDIISQANAKKVIAEYIDAPSAIEAIIEKLGLKQVSDEGMIRELVQGIIAANPQQAADFKAGKTKLMSFFVGQAMKASKGKANPKQVNQIVQEELNK</sequence>
<comment type="function">
    <text evidence="1">Allows the formation of correctly charged Asn-tRNA(Asn) or Gln-tRNA(Gln) through the transamidation of misacylated Asp-tRNA(Asn) or Glu-tRNA(Gln) in organisms which lack either or both of asparaginyl-tRNA or glutaminyl-tRNA synthetases. The reaction takes place in the presence of glutamine and ATP through an activated phospho-Asp-tRNA(Asn) or phospho-Glu-tRNA(Gln).</text>
</comment>
<comment type="catalytic activity">
    <reaction evidence="1">
        <text>L-glutamyl-tRNA(Gln) + L-glutamine + ATP + H2O = L-glutaminyl-tRNA(Gln) + L-glutamate + ADP + phosphate + H(+)</text>
        <dbReference type="Rhea" id="RHEA:17521"/>
        <dbReference type="Rhea" id="RHEA-COMP:9681"/>
        <dbReference type="Rhea" id="RHEA-COMP:9684"/>
        <dbReference type="ChEBI" id="CHEBI:15377"/>
        <dbReference type="ChEBI" id="CHEBI:15378"/>
        <dbReference type="ChEBI" id="CHEBI:29985"/>
        <dbReference type="ChEBI" id="CHEBI:30616"/>
        <dbReference type="ChEBI" id="CHEBI:43474"/>
        <dbReference type="ChEBI" id="CHEBI:58359"/>
        <dbReference type="ChEBI" id="CHEBI:78520"/>
        <dbReference type="ChEBI" id="CHEBI:78521"/>
        <dbReference type="ChEBI" id="CHEBI:456216"/>
    </reaction>
</comment>
<comment type="catalytic activity">
    <reaction evidence="1">
        <text>L-aspartyl-tRNA(Asn) + L-glutamine + ATP + H2O = L-asparaginyl-tRNA(Asn) + L-glutamate + ADP + phosphate + 2 H(+)</text>
        <dbReference type="Rhea" id="RHEA:14513"/>
        <dbReference type="Rhea" id="RHEA-COMP:9674"/>
        <dbReference type="Rhea" id="RHEA-COMP:9677"/>
        <dbReference type="ChEBI" id="CHEBI:15377"/>
        <dbReference type="ChEBI" id="CHEBI:15378"/>
        <dbReference type="ChEBI" id="CHEBI:29985"/>
        <dbReference type="ChEBI" id="CHEBI:30616"/>
        <dbReference type="ChEBI" id="CHEBI:43474"/>
        <dbReference type="ChEBI" id="CHEBI:58359"/>
        <dbReference type="ChEBI" id="CHEBI:78515"/>
        <dbReference type="ChEBI" id="CHEBI:78516"/>
        <dbReference type="ChEBI" id="CHEBI:456216"/>
    </reaction>
</comment>
<comment type="subunit">
    <text evidence="1">Heterotrimer of A, B and C subunits.</text>
</comment>
<comment type="similarity">
    <text evidence="1">Belongs to the GatB/GatE family. GatB subfamily.</text>
</comment>
<feature type="chain" id="PRO_1000015969" description="Aspartyl/glutamyl-tRNA(Asn/Gln) amidotransferase subunit B">
    <location>
        <begin position="1"/>
        <end position="473"/>
    </location>
</feature>
<gene>
    <name evidence="1" type="primary">gatB</name>
    <name type="ordered locus">FTW_0095</name>
</gene>
<proteinExistence type="inferred from homology"/>
<evidence type="ECO:0000255" key="1">
    <source>
        <dbReference type="HAMAP-Rule" id="MF_00121"/>
    </source>
</evidence>
<organism>
    <name type="scientific">Francisella tularensis subsp. tularensis (strain WY96-3418)</name>
    <dbReference type="NCBI Taxonomy" id="418136"/>
    <lineage>
        <taxon>Bacteria</taxon>
        <taxon>Pseudomonadati</taxon>
        <taxon>Pseudomonadota</taxon>
        <taxon>Gammaproteobacteria</taxon>
        <taxon>Thiotrichales</taxon>
        <taxon>Francisellaceae</taxon>
        <taxon>Francisella</taxon>
    </lineage>
</organism>
<dbReference type="EC" id="6.3.5.-" evidence="1"/>
<dbReference type="EMBL" id="CP000608">
    <property type="protein sequence ID" value="ABO46086.1"/>
    <property type="molecule type" value="Genomic_DNA"/>
</dbReference>
<dbReference type="RefSeq" id="WP_003017411.1">
    <property type="nucleotide sequence ID" value="NC_009257.1"/>
</dbReference>
<dbReference type="SMR" id="A4IVY4"/>
<dbReference type="KEGG" id="ftw:FTW_0095"/>
<dbReference type="HOGENOM" id="CLU_019240_0_0_6"/>
<dbReference type="GO" id="GO:0050566">
    <property type="term" value="F:asparaginyl-tRNA synthase (glutamine-hydrolyzing) activity"/>
    <property type="evidence" value="ECO:0007669"/>
    <property type="project" value="RHEA"/>
</dbReference>
<dbReference type="GO" id="GO:0005524">
    <property type="term" value="F:ATP binding"/>
    <property type="evidence" value="ECO:0007669"/>
    <property type="project" value="UniProtKB-KW"/>
</dbReference>
<dbReference type="GO" id="GO:0050567">
    <property type="term" value="F:glutaminyl-tRNA synthase (glutamine-hydrolyzing) activity"/>
    <property type="evidence" value="ECO:0007669"/>
    <property type="project" value="UniProtKB-UniRule"/>
</dbReference>
<dbReference type="GO" id="GO:0070681">
    <property type="term" value="P:glutaminyl-tRNAGln biosynthesis via transamidation"/>
    <property type="evidence" value="ECO:0007669"/>
    <property type="project" value="TreeGrafter"/>
</dbReference>
<dbReference type="GO" id="GO:0006412">
    <property type="term" value="P:translation"/>
    <property type="evidence" value="ECO:0007669"/>
    <property type="project" value="UniProtKB-UniRule"/>
</dbReference>
<dbReference type="FunFam" id="1.10.10.410:FF:000001">
    <property type="entry name" value="Aspartyl/glutamyl-tRNA(Asn/Gln) amidotransferase subunit B"/>
    <property type="match status" value="1"/>
</dbReference>
<dbReference type="Gene3D" id="1.10.10.410">
    <property type="match status" value="1"/>
</dbReference>
<dbReference type="HAMAP" id="MF_00121">
    <property type="entry name" value="GatB"/>
    <property type="match status" value="1"/>
</dbReference>
<dbReference type="InterPro" id="IPR017959">
    <property type="entry name" value="Asn/Gln-tRNA_amidoTrfase_suB/E"/>
</dbReference>
<dbReference type="InterPro" id="IPR006075">
    <property type="entry name" value="Asn/Gln-tRNA_Trfase_suB/E_cat"/>
</dbReference>
<dbReference type="InterPro" id="IPR018027">
    <property type="entry name" value="Asn/Gln_amidotransferase"/>
</dbReference>
<dbReference type="InterPro" id="IPR003789">
    <property type="entry name" value="Asn/Gln_tRNA_amidoTrase-B-like"/>
</dbReference>
<dbReference type="InterPro" id="IPR004413">
    <property type="entry name" value="GatB"/>
</dbReference>
<dbReference type="InterPro" id="IPR023168">
    <property type="entry name" value="GatB_Yqey_C_2"/>
</dbReference>
<dbReference type="InterPro" id="IPR017958">
    <property type="entry name" value="Gln-tRNA_amidoTrfase_suB_CS"/>
</dbReference>
<dbReference type="InterPro" id="IPR014746">
    <property type="entry name" value="Gln_synth/guanido_kin_cat_dom"/>
</dbReference>
<dbReference type="NCBIfam" id="TIGR00133">
    <property type="entry name" value="gatB"/>
    <property type="match status" value="1"/>
</dbReference>
<dbReference type="NCBIfam" id="NF004012">
    <property type="entry name" value="PRK05477.1-2"/>
    <property type="match status" value="1"/>
</dbReference>
<dbReference type="NCBIfam" id="NF004014">
    <property type="entry name" value="PRK05477.1-4"/>
    <property type="match status" value="1"/>
</dbReference>
<dbReference type="PANTHER" id="PTHR11659">
    <property type="entry name" value="GLUTAMYL-TRNA GLN AMIDOTRANSFERASE SUBUNIT B MITOCHONDRIAL AND PROKARYOTIC PET112-RELATED"/>
    <property type="match status" value="1"/>
</dbReference>
<dbReference type="PANTHER" id="PTHR11659:SF0">
    <property type="entry name" value="GLUTAMYL-TRNA(GLN) AMIDOTRANSFERASE SUBUNIT B, MITOCHONDRIAL"/>
    <property type="match status" value="1"/>
</dbReference>
<dbReference type="Pfam" id="PF02934">
    <property type="entry name" value="GatB_N"/>
    <property type="match status" value="1"/>
</dbReference>
<dbReference type="Pfam" id="PF02637">
    <property type="entry name" value="GatB_Yqey"/>
    <property type="match status" value="1"/>
</dbReference>
<dbReference type="SMART" id="SM00845">
    <property type="entry name" value="GatB_Yqey"/>
    <property type="match status" value="1"/>
</dbReference>
<dbReference type="SUPFAM" id="SSF89095">
    <property type="entry name" value="GatB/YqeY motif"/>
    <property type="match status" value="1"/>
</dbReference>
<dbReference type="SUPFAM" id="SSF55931">
    <property type="entry name" value="Glutamine synthetase/guanido kinase"/>
    <property type="match status" value="1"/>
</dbReference>
<dbReference type="PROSITE" id="PS01234">
    <property type="entry name" value="GATB"/>
    <property type="match status" value="1"/>
</dbReference>
<keyword id="KW-0067">ATP-binding</keyword>
<keyword id="KW-0436">Ligase</keyword>
<keyword id="KW-0547">Nucleotide-binding</keyword>
<keyword id="KW-0648">Protein biosynthesis</keyword>
<name>GATB_FRATW</name>
<accession>A4IVY4</accession>
<reference key="1">
    <citation type="journal article" date="2007" name="PLoS ONE">
        <title>Complete genomic characterization of a pathogenic A.II strain of Francisella tularensis subspecies tularensis.</title>
        <authorList>
            <person name="Beckstrom-Sternberg S.M."/>
            <person name="Auerbach R.K."/>
            <person name="Godbole S."/>
            <person name="Pearson J.V."/>
            <person name="Beckstrom-Sternberg J.S."/>
            <person name="Deng Z."/>
            <person name="Munk C."/>
            <person name="Kubota K."/>
            <person name="Zhou Y."/>
            <person name="Bruce D."/>
            <person name="Noronha J."/>
            <person name="Scheuermann R.H."/>
            <person name="Wang A."/>
            <person name="Wei X."/>
            <person name="Wang J."/>
            <person name="Hao J."/>
            <person name="Wagner D.M."/>
            <person name="Brettin T.S."/>
            <person name="Brown N."/>
            <person name="Gilna P."/>
            <person name="Keim P.S."/>
        </authorList>
    </citation>
    <scope>NUCLEOTIDE SEQUENCE [LARGE SCALE GENOMIC DNA]</scope>
    <source>
        <strain>WY96-3418</strain>
    </source>
</reference>